<gene>
    <name evidence="6" type="primary">PI1</name>
</gene>
<dbReference type="EMBL" id="AY221985">
    <property type="protein sequence ID" value="AAP46156.1"/>
    <property type="molecule type" value="mRNA"/>
</dbReference>
<dbReference type="SMR" id="Q6XNP7"/>
<dbReference type="Allergome" id="11621">
    <property type="allergen name" value="Hev b 15"/>
</dbReference>
<dbReference type="Allergome" id="8756">
    <property type="allergen name" value="Hev b SPI"/>
</dbReference>
<dbReference type="MEROPS" id="I13.008"/>
<dbReference type="iPTMnet" id="Q6XNP7"/>
<dbReference type="OrthoDB" id="10013825at2759"/>
<dbReference type="GO" id="GO:0004867">
    <property type="term" value="F:serine-type endopeptidase inhibitor activity"/>
    <property type="evidence" value="ECO:0000314"/>
    <property type="project" value="UniProtKB"/>
</dbReference>
<dbReference type="GO" id="GO:0009611">
    <property type="term" value="P:response to wounding"/>
    <property type="evidence" value="ECO:0007669"/>
    <property type="project" value="InterPro"/>
</dbReference>
<dbReference type="FunFam" id="3.30.10.10:FF:000001">
    <property type="entry name" value="Serine protease inhibitor, potato inhibitor I-type family protein"/>
    <property type="match status" value="1"/>
</dbReference>
<dbReference type="Gene3D" id="3.30.10.10">
    <property type="entry name" value="Trypsin Inhibitor V, subunit A"/>
    <property type="match status" value="1"/>
</dbReference>
<dbReference type="InterPro" id="IPR000864">
    <property type="entry name" value="Prot_inh_pot1"/>
</dbReference>
<dbReference type="InterPro" id="IPR036354">
    <property type="entry name" value="Prot_inh_pot1_sf"/>
</dbReference>
<dbReference type="PANTHER" id="PTHR33091:SF73">
    <property type="entry name" value="INHIBITOR OF TRYPSIN AND HAGEMAN FACTOR-LIKE"/>
    <property type="match status" value="1"/>
</dbReference>
<dbReference type="PANTHER" id="PTHR33091">
    <property type="entry name" value="PROTEIN, PUTATIVE, EXPRESSED-RELATED"/>
    <property type="match status" value="1"/>
</dbReference>
<dbReference type="Pfam" id="PF00280">
    <property type="entry name" value="potato_inhibit"/>
    <property type="match status" value="1"/>
</dbReference>
<dbReference type="PRINTS" id="PR00292">
    <property type="entry name" value="POTATOINHBTR"/>
</dbReference>
<dbReference type="SUPFAM" id="SSF54654">
    <property type="entry name" value="CI-2 family of serine protease inhibitors"/>
    <property type="match status" value="1"/>
</dbReference>
<dbReference type="PROSITE" id="PS00285">
    <property type="entry name" value="POTATO_INHIBITOR"/>
    <property type="match status" value="1"/>
</dbReference>
<proteinExistence type="evidence at protein level"/>
<accession>Q6XNP7</accession>
<protein>
    <recommendedName>
        <fullName>Protease inhibitor HPI</fullName>
    </recommendedName>
    <alternativeName>
        <fullName>HbPI1</fullName>
    </alternativeName>
    <alternativeName>
        <fullName>Protease inhibitor 1</fullName>
    </alternativeName>
</protein>
<organism>
    <name type="scientific">Hevea brasiliensis</name>
    <name type="common">Para rubber tree</name>
    <name type="synonym">Siphonia brasiliensis</name>
    <dbReference type="NCBI Taxonomy" id="3981"/>
    <lineage>
        <taxon>Eukaryota</taxon>
        <taxon>Viridiplantae</taxon>
        <taxon>Streptophyta</taxon>
        <taxon>Embryophyta</taxon>
        <taxon>Tracheophyta</taxon>
        <taxon>Spermatophyta</taxon>
        <taxon>Magnoliopsida</taxon>
        <taxon>eudicotyledons</taxon>
        <taxon>Gunneridae</taxon>
        <taxon>Pentapetalae</taxon>
        <taxon>rosids</taxon>
        <taxon>fabids</taxon>
        <taxon>Malpighiales</taxon>
        <taxon>Euphorbiaceae</taxon>
        <taxon>Crotonoideae</taxon>
        <taxon>Micrandreae</taxon>
        <taxon>Hevea</taxon>
    </lineage>
</organism>
<reference evidence="5 6" key="1">
    <citation type="journal article" date="2003" name="Plant Mol. Biol.">
        <title>Transcriptome analysis reveals novel features of the molecular events occurring in the laticifers of Hevea brasiliensis (para rubber tree).</title>
        <authorList>
            <person name="Ko J.-H."/>
            <person name="Chow K.-S."/>
            <person name="Han K.-H."/>
        </authorList>
    </citation>
    <scope>NUCLEOTIDE SEQUENCE [MRNA]</scope>
    <source>
        <tissue evidence="3">Latex</tissue>
    </source>
</reference>
<reference evidence="5" key="2">
    <citation type="journal article" date="2006" name="Phytochemistry">
        <title>Isolation and characterization of isoinhibitors of the potato protease inhibitor I family from the latex of the rubber trees, Hevea brasiliensis.</title>
        <authorList>
            <person name="Sritanyarat W."/>
            <person name="Pearce G."/>
            <person name="Siems W.F."/>
            <person name="Ryan C.A."/>
            <person name="Wititsuwannakul R."/>
            <person name="Wititsuwannakul D."/>
        </authorList>
    </citation>
    <scope>PROTEIN SEQUENCE OF 2-70</scope>
    <scope>FUNCTION</scope>
    <scope>MASS SPECTROMETRY</scope>
    <scope>GLUTATHIONYLATION AT CYS-5</scope>
    <scope>DISULFIDE BOND</scope>
    <scope>CLEAVAGE OF INITIATOR METHIONINE</scope>
    <scope>ACETYLATION AT ALA-2</scope>
    <source>
        <tissue evidence="4">Latex</tissue>
    </source>
</reference>
<keyword id="KW-0007">Acetylation</keyword>
<keyword id="KW-0903">Direct protein sequencing</keyword>
<keyword id="KW-1015">Disulfide bond</keyword>
<keyword id="KW-0318">Glutathionylation</keyword>
<keyword id="KW-0646">Protease inhibitor</keyword>
<keyword id="KW-0722">Serine protease inhibitor</keyword>
<feature type="initiator methionine" description="Removed" evidence="4">
    <location>
        <position position="1"/>
    </location>
</feature>
<feature type="chain" id="PRO_0000273520" description="Protease inhibitor HPI" evidence="4">
    <location>
        <begin position="2"/>
        <end position="70"/>
    </location>
</feature>
<feature type="site" description="Reactive bond" evidence="1">
    <location>
        <begin position="46"/>
        <end position="47"/>
    </location>
</feature>
<feature type="modified residue" description="N-acetylalanine" evidence="4">
    <location>
        <position position="2"/>
    </location>
</feature>
<feature type="modified residue" description="S-glutathionyl cysteine; alternate" evidence="4">
    <location>
        <position position="5"/>
    </location>
</feature>
<feature type="disulfide bond" description="Interchain; alternate" evidence="4">
    <location>
        <position position="5"/>
    </location>
</feature>
<feature type="sequence conflict" description="In Ref. 1; AAP46156." evidence="5" ref="1">
    <original>NS</original>
    <variation>DA</variation>
    <location>
        <begin position="9"/>
        <end position="10"/>
    </location>
</feature>
<name>HPI_HEVBR</name>
<evidence type="ECO:0000250" key="1">
    <source>
        <dbReference type="UniProtKB" id="P82381"/>
    </source>
</evidence>
<evidence type="ECO:0000255" key="2"/>
<evidence type="ECO:0000269" key="3">
    <source>
    </source>
</evidence>
<evidence type="ECO:0000269" key="4">
    <source>
    </source>
</evidence>
<evidence type="ECO:0000305" key="5"/>
<evidence type="ECO:0000312" key="6">
    <source>
        <dbReference type="EMBL" id="AAP46156.1"/>
    </source>
</evidence>
<comment type="function">
    <text evidence="4">Inhibitor of serine proteases, strongly inhibits subtilisin A and weakly inhibits trypsin. Does not inhibit chymotrypsin, papain, pepsin, pronase E, protease type XIII and thermolysin. HPI-1 inhibits subtilisin A with an Ki of 0.21 nM. HPI-2a inhibits subtilisin A with an Ki of 0.08 nM. HPI-2b inhibits subtilisin A with an Ki of 0.1 nM.</text>
</comment>
<comment type="subunit">
    <text evidence="4">Monomer and homodimer; disulfide-linked.</text>
</comment>
<comment type="PTM">
    <text evidence="4">Occurs in 3 forms that differ in the modification of Cys-5, HPI-1 forms a homodimer through a disulfide bond, HPI-2a is modified by glutathionylation, and HPI-2b is covalently modified by addition of an unidentified adduct but not by a disulfide linkage.</text>
</comment>
<comment type="mass spectrometry">
    <text>HPI-1 homodimer.</text>
</comment>
<comment type="mass spectrometry">
    <text>HPI-2a.</text>
</comment>
<comment type="mass spectrometry">
    <text>HPI-2b.</text>
</comment>
<comment type="similarity">
    <text evidence="2">Belongs to the protease inhibitor I13 (potato type I serine protease inhibitor) family.</text>
</comment>
<sequence>MASQCPVKNSWPELVGTNGDIAAGIIQTENANVKAIVVKEGLPITQDLNFNRVRVFVDENRVVTQVPAIG</sequence>